<feature type="chain" id="PRO_0000128914" description="DNA-directed RNA polymerase subunit omega">
    <location>
        <begin position="1"/>
        <end position="70"/>
    </location>
</feature>
<gene>
    <name evidence="1" type="primary">rpoZ</name>
    <name type="ordered locus">BC_3868</name>
</gene>
<protein>
    <recommendedName>
        <fullName evidence="1">DNA-directed RNA polymerase subunit omega</fullName>
        <shortName evidence="1">RNAP omega subunit</shortName>
        <ecNumber evidence="1">2.7.7.6</ecNumber>
    </recommendedName>
    <alternativeName>
        <fullName evidence="1">RNA polymerase omega subunit</fullName>
    </alternativeName>
    <alternativeName>
        <fullName evidence="1">Transcriptase subunit omega</fullName>
    </alternativeName>
</protein>
<organism>
    <name type="scientific">Bacillus cereus (strain ATCC 14579 / DSM 31 / CCUG 7414 / JCM 2152 / NBRC 15305 / NCIMB 9373 / NCTC 2599 / NRRL B-3711)</name>
    <dbReference type="NCBI Taxonomy" id="226900"/>
    <lineage>
        <taxon>Bacteria</taxon>
        <taxon>Bacillati</taxon>
        <taxon>Bacillota</taxon>
        <taxon>Bacilli</taxon>
        <taxon>Bacillales</taxon>
        <taxon>Bacillaceae</taxon>
        <taxon>Bacillus</taxon>
        <taxon>Bacillus cereus group</taxon>
    </lineage>
</organism>
<name>RPOZ_BACCR</name>
<evidence type="ECO:0000255" key="1">
    <source>
        <dbReference type="HAMAP-Rule" id="MF_00366"/>
    </source>
</evidence>
<proteinExistence type="inferred from homology"/>
<comment type="function">
    <text evidence="1">Promotes RNA polymerase assembly. Latches the N- and C-terminal regions of the beta' subunit thereby facilitating its interaction with the beta and alpha subunits.</text>
</comment>
<comment type="catalytic activity">
    <reaction evidence="1">
        <text>RNA(n) + a ribonucleoside 5'-triphosphate = RNA(n+1) + diphosphate</text>
        <dbReference type="Rhea" id="RHEA:21248"/>
        <dbReference type="Rhea" id="RHEA-COMP:14527"/>
        <dbReference type="Rhea" id="RHEA-COMP:17342"/>
        <dbReference type="ChEBI" id="CHEBI:33019"/>
        <dbReference type="ChEBI" id="CHEBI:61557"/>
        <dbReference type="ChEBI" id="CHEBI:140395"/>
        <dbReference type="EC" id="2.7.7.6"/>
    </reaction>
</comment>
<comment type="subunit">
    <text evidence="1">The RNAP catalytic core consists of 2 alpha, 1 beta, 1 beta' and 1 omega subunit. When a sigma factor is associated with the core the holoenzyme is formed, which can initiate transcription.</text>
</comment>
<comment type="similarity">
    <text evidence="1">Belongs to the RNA polymerase subunit omega family.</text>
</comment>
<dbReference type="EC" id="2.7.7.6" evidence="1"/>
<dbReference type="EMBL" id="AE016877">
    <property type="protein sequence ID" value="AAP10790.1"/>
    <property type="molecule type" value="Genomic_DNA"/>
</dbReference>
<dbReference type="RefSeq" id="NP_833589.1">
    <property type="nucleotide sequence ID" value="NC_004722.1"/>
</dbReference>
<dbReference type="RefSeq" id="WP_000933960.1">
    <property type="nucleotide sequence ID" value="NZ_CP138336.1"/>
</dbReference>
<dbReference type="SMR" id="Q819T7"/>
<dbReference type="STRING" id="226900.BC_3868"/>
<dbReference type="KEGG" id="bce:BC3868"/>
<dbReference type="PATRIC" id="fig|226900.8.peg.3987"/>
<dbReference type="HOGENOM" id="CLU_125406_6_0_9"/>
<dbReference type="OrthoDB" id="9815459at2"/>
<dbReference type="Proteomes" id="UP000001417">
    <property type="component" value="Chromosome"/>
</dbReference>
<dbReference type="GO" id="GO:0000345">
    <property type="term" value="C:cytosolic DNA-directed RNA polymerase complex"/>
    <property type="evidence" value="ECO:0000318"/>
    <property type="project" value="GO_Central"/>
</dbReference>
<dbReference type="GO" id="GO:0001000">
    <property type="term" value="F:bacterial-type RNA polymerase core enzyme binding"/>
    <property type="evidence" value="ECO:0000318"/>
    <property type="project" value="GO_Central"/>
</dbReference>
<dbReference type="GO" id="GO:0003677">
    <property type="term" value="F:DNA binding"/>
    <property type="evidence" value="ECO:0007669"/>
    <property type="project" value="UniProtKB-UniRule"/>
</dbReference>
<dbReference type="GO" id="GO:0003899">
    <property type="term" value="F:DNA-directed RNA polymerase activity"/>
    <property type="evidence" value="ECO:0007669"/>
    <property type="project" value="UniProtKB-UniRule"/>
</dbReference>
<dbReference type="GO" id="GO:0006352">
    <property type="term" value="P:DNA-templated transcription initiation"/>
    <property type="evidence" value="ECO:0000318"/>
    <property type="project" value="GO_Central"/>
</dbReference>
<dbReference type="Gene3D" id="3.90.940.10">
    <property type="match status" value="1"/>
</dbReference>
<dbReference type="HAMAP" id="MF_00366">
    <property type="entry name" value="RNApol_bact_RpoZ"/>
    <property type="match status" value="1"/>
</dbReference>
<dbReference type="InterPro" id="IPR003716">
    <property type="entry name" value="DNA-dir_RNA_pol_omega"/>
</dbReference>
<dbReference type="InterPro" id="IPR006110">
    <property type="entry name" value="Pol_omega/Rpo6/RPB6"/>
</dbReference>
<dbReference type="InterPro" id="IPR036161">
    <property type="entry name" value="RPB6/omega-like_sf"/>
</dbReference>
<dbReference type="NCBIfam" id="TIGR00690">
    <property type="entry name" value="rpoZ"/>
    <property type="match status" value="1"/>
</dbReference>
<dbReference type="PANTHER" id="PTHR34476">
    <property type="entry name" value="DNA-DIRECTED RNA POLYMERASE SUBUNIT OMEGA"/>
    <property type="match status" value="1"/>
</dbReference>
<dbReference type="PANTHER" id="PTHR34476:SF1">
    <property type="entry name" value="DNA-DIRECTED RNA POLYMERASE SUBUNIT OMEGA"/>
    <property type="match status" value="1"/>
</dbReference>
<dbReference type="Pfam" id="PF01192">
    <property type="entry name" value="RNA_pol_Rpb6"/>
    <property type="match status" value="1"/>
</dbReference>
<dbReference type="SMART" id="SM01409">
    <property type="entry name" value="RNA_pol_Rpb6"/>
    <property type="match status" value="1"/>
</dbReference>
<dbReference type="SUPFAM" id="SSF63562">
    <property type="entry name" value="RPB6/omega subunit-like"/>
    <property type="match status" value="1"/>
</dbReference>
<sequence>MLNPSIDSLLQKIDSKYTLVTVAAKRAREMQLANNCVVEKPVSHKCVGKALEEIDAEALSYVPSEDKVAE</sequence>
<keyword id="KW-0240">DNA-directed RNA polymerase</keyword>
<keyword id="KW-0548">Nucleotidyltransferase</keyword>
<keyword id="KW-1185">Reference proteome</keyword>
<keyword id="KW-0804">Transcription</keyword>
<keyword id="KW-0808">Transferase</keyword>
<accession>Q819T7</accession>
<reference key="1">
    <citation type="journal article" date="2003" name="Nature">
        <title>Genome sequence of Bacillus cereus and comparative analysis with Bacillus anthracis.</title>
        <authorList>
            <person name="Ivanova N."/>
            <person name="Sorokin A."/>
            <person name="Anderson I."/>
            <person name="Galleron N."/>
            <person name="Candelon B."/>
            <person name="Kapatral V."/>
            <person name="Bhattacharyya A."/>
            <person name="Reznik G."/>
            <person name="Mikhailova N."/>
            <person name="Lapidus A."/>
            <person name="Chu L."/>
            <person name="Mazur M."/>
            <person name="Goltsman E."/>
            <person name="Larsen N."/>
            <person name="D'Souza M."/>
            <person name="Walunas T."/>
            <person name="Grechkin Y."/>
            <person name="Pusch G."/>
            <person name="Haselkorn R."/>
            <person name="Fonstein M."/>
            <person name="Ehrlich S.D."/>
            <person name="Overbeek R."/>
            <person name="Kyrpides N.C."/>
        </authorList>
    </citation>
    <scope>NUCLEOTIDE SEQUENCE [LARGE SCALE GENOMIC DNA]</scope>
    <source>
        <strain>ATCC 14579 / DSM 31 / CCUG 7414 / JCM 2152 / NBRC 15305 / NCIMB 9373 / NCTC 2599 / NRRL B-3711</strain>
    </source>
</reference>